<comment type="function">
    <text evidence="1">Part of the ATP-driven transport system AdcABC for zinc. Required for transformability (By similarity).</text>
</comment>
<comment type="similarity">
    <text evidence="3">Belongs to the ABC transporter superfamily.</text>
</comment>
<evidence type="ECO:0000250" key="1"/>
<evidence type="ECO:0000255" key="2">
    <source>
        <dbReference type="PROSITE-ProRule" id="PRU00434"/>
    </source>
</evidence>
<evidence type="ECO:0000305" key="3"/>
<dbReference type="EMBL" id="Z71552">
    <property type="protein sequence ID" value="CAA96186.1"/>
    <property type="molecule type" value="Genomic_DNA"/>
</dbReference>
<dbReference type="EMBL" id="AE007317">
    <property type="protein sequence ID" value="AAL00779.1"/>
    <property type="molecule type" value="Genomic_DNA"/>
</dbReference>
<dbReference type="PIR" id="F98118">
    <property type="entry name" value="F98118"/>
</dbReference>
<dbReference type="PIR" id="T46754">
    <property type="entry name" value="T46754"/>
</dbReference>
<dbReference type="RefSeq" id="NP_359568.1">
    <property type="nucleotide sequence ID" value="NC_003098.1"/>
</dbReference>
<dbReference type="RefSeq" id="WP_001269474.1">
    <property type="nucleotide sequence ID" value="NC_003098.1"/>
</dbReference>
<dbReference type="SMR" id="P0A2U7"/>
<dbReference type="STRING" id="171101.spr1977"/>
<dbReference type="KEGG" id="spr:spr1977"/>
<dbReference type="PATRIC" id="fig|171101.6.peg.2140"/>
<dbReference type="eggNOG" id="COG1121">
    <property type="taxonomic scope" value="Bacteria"/>
</dbReference>
<dbReference type="HOGENOM" id="CLU_000604_1_11_9"/>
<dbReference type="Proteomes" id="UP000000586">
    <property type="component" value="Chromosome"/>
</dbReference>
<dbReference type="GO" id="GO:0043190">
    <property type="term" value="C:ATP-binding cassette (ABC) transporter complex"/>
    <property type="evidence" value="ECO:0000318"/>
    <property type="project" value="GO_Central"/>
</dbReference>
<dbReference type="GO" id="GO:0005524">
    <property type="term" value="F:ATP binding"/>
    <property type="evidence" value="ECO:0007669"/>
    <property type="project" value="UniProtKB-KW"/>
</dbReference>
<dbReference type="GO" id="GO:0016887">
    <property type="term" value="F:ATP hydrolysis activity"/>
    <property type="evidence" value="ECO:0007669"/>
    <property type="project" value="InterPro"/>
</dbReference>
<dbReference type="GO" id="GO:0042626">
    <property type="term" value="F:ATPase-coupled transmembrane transporter activity"/>
    <property type="evidence" value="ECO:0000318"/>
    <property type="project" value="GO_Central"/>
</dbReference>
<dbReference type="GO" id="GO:0030420">
    <property type="term" value="P:establishment of competence for transformation"/>
    <property type="evidence" value="ECO:0007669"/>
    <property type="project" value="UniProtKB-KW"/>
</dbReference>
<dbReference type="GO" id="GO:0006829">
    <property type="term" value="P:zinc ion transport"/>
    <property type="evidence" value="ECO:0007669"/>
    <property type="project" value="UniProtKB-KW"/>
</dbReference>
<dbReference type="CDD" id="cd03235">
    <property type="entry name" value="ABC_Metallic_Cations"/>
    <property type="match status" value="1"/>
</dbReference>
<dbReference type="FunFam" id="3.40.50.300:FF:001378">
    <property type="entry name" value="Zinc ABC transporter, ATP-binding protein"/>
    <property type="match status" value="1"/>
</dbReference>
<dbReference type="Gene3D" id="3.40.50.300">
    <property type="entry name" value="P-loop containing nucleotide triphosphate hydrolases"/>
    <property type="match status" value="1"/>
</dbReference>
<dbReference type="InterPro" id="IPR003593">
    <property type="entry name" value="AAA+_ATPase"/>
</dbReference>
<dbReference type="InterPro" id="IPR003439">
    <property type="entry name" value="ABC_transporter-like_ATP-bd"/>
</dbReference>
<dbReference type="InterPro" id="IPR017871">
    <property type="entry name" value="ABC_transporter-like_CS"/>
</dbReference>
<dbReference type="InterPro" id="IPR050153">
    <property type="entry name" value="Metal_Ion_Import_ABC"/>
</dbReference>
<dbReference type="InterPro" id="IPR027417">
    <property type="entry name" value="P-loop_NTPase"/>
</dbReference>
<dbReference type="PANTHER" id="PTHR42734:SF4">
    <property type="entry name" value="HIGH-AFFINITY ZINC UPTAKE SYSTEM ATP-BINDING PROTEIN ZNUC"/>
    <property type="match status" value="1"/>
</dbReference>
<dbReference type="PANTHER" id="PTHR42734">
    <property type="entry name" value="METAL TRANSPORT SYSTEM ATP-BINDING PROTEIN TM_0124-RELATED"/>
    <property type="match status" value="1"/>
</dbReference>
<dbReference type="Pfam" id="PF00005">
    <property type="entry name" value="ABC_tran"/>
    <property type="match status" value="1"/>
</dbReference>
<dbReference type="SMART" id="SM00382">
    <property type="entry name" value="AAA"/>
    <property type="match status" value="1"/>
</dbReference>
<dbReference type="SUPFAM" id="SSF52540">
    <property type="entry name" value="P-loop containing nucleoside triphosphate hydrolases"/>
    <property type="match status" value="1"/>
</dbReference>
<dbReference type="PROSITE" id="PS00211">
    <property type="entry name" value="ABC_TRANSPORTER_1"/>
    <property type="match status" value="1"/>
</dbReference>
<dbReference type="PROSITE" id="PS50893">
    <property type="entry name" value="ABC_TRANSPORTER_2"/>
    <property type="match status" value="1"/>
</dbReference>
<feature type="chain" id="PRO_0000091923" description="Zinc transport system ATP-binding protein AdcC">
    <location>
        <begin position="1"/>
        <end position="234"/>
    </location>
</feature>
<feature type="domain" description="ABC transporter" evidence="2">
    <location>
        <begin position="4"/>
        <end position="234"/>
    </location>
</feature>
<feature type="binding site" evidence="2">
    <location>
        <begin position="36"/>
        <end position="43"/>
    </location>
    <ligand>
        <name>ATP</name>
        <dbReference type="ChEBI" id="CHEBI:30616"/>
    </ligand>
</feature>
<sequence>MRYITVEDLSFYYDKEPVLEHINYCVDSGEFVTLTGENGAAKTTLIKASLGILQPRIGKVAISKTNTQGKKLRIAYLPQQIASFNAGFPSTVYEFVKSGRYPRKGWFRRLNAHDEEHIKASLDSVGMWEHRDKRLGSLSGGQKQRAVIARMFASDPDVFILDEPTTGMDAGSKNEFYELMHHSAHHHGKAVLMITHDPEEVKDYADRNIHLVRNQDSPWRCFNVHENGQEVGHA</sequence>
<keyword id="KW-0067">ATP-binding</keyword>
<keyword id="KW-0178">Competence</keyword>
<keyword id="KW-0406">Ion transport</keyword>
<keyword id="KW-0547">Nucleotide-binding</keyword>
<keyword id="KW-1185">Reference proteome</keyword>
<keyword id="KW-0813">Transport</keyword>
<keyword id="KW-0862">Zinc</keyword>
<keyword id="KW-0864">Zinc transport</keyword>
<name>ADCC_STRR6</name>
<gene>
    <name type="primary">adcC</name>
    <name type="ordered locus">spr1977</name>
</gene>
<proteinExistence type="inferred from homology"/>
<reference key="1">
    <citation type="journal article" date="1997" name="Res. Microbiol.">
        <title>The adc locus, which affects competence for genetic transformation in Streptococcus pneumoniae, encodes an ABC transporter with a putative lipoprotein homologous to a family of streptococcal adhesins.</title>
        <authorList>
            <person name="Dintilhac A."/>
            <person name="Claverys J.-P."/>
        </authorList>
    </citation>
    <scope>NUCLEOTIDE SEQUENCE [GENOMIC DNA]</scope>
</reference>
<reference key="2">
    <citation type="journal article" date="2001" name="J. Bacteriol.">
        <title>Genome of the bacterium Streptococcus pneumoniae strain R6.</title>
        <authorList>
            <person name="Hoskins J."/>
            <person name="Alborn W.E. Jr."/>
            <person name="Arnold J."/>
            <person name="Blaszczak L.C."/>
            <person name="Burgett S."/>
            <person name="DeHoff B.S."/>
            <person name="Estrem S.T."/>
            <person name="Fritz L."/>
            <person name="Fu D.-J."/>
            <person name="Fuller W."/>
            <person name="Geringer C."/>
            <person name="Gilmour R."/>
            <person name="Glass J.S."/>
            <person name="Khoja H."/>
            <person name="Kraft A.R."/>
            <person name="Lagace R.E."/>
            <person name="LeBlanc D.J."/>
            <person name="Lee L.N."/>
            <person name="Lefkowitz E.J."/>
            <person name="Lu J."/>
            <person name="Matsushima P."/>
            <person name="McAhren S.M."/>
            <person name="McHenney M."/>
            <person name="McLeaster K."/>
            <person name="Mundy C.W."/>
            <person name="Nicas T.I."/>
            <person name="Norris F.H."/>
            <person name="O'Gara M."/>
            <person name="Peery R.B."/>
            <person name="Robertson G.T."/>
            <person name="Rockey P."/>
            <person name="Sun P.-M."/>
            <person name="Winkler M.E."/>
            <person name="Yang Y."/>
            <person name="Young-Bellido M."/>
            <person name="Zhao G."/>
            <person name="Zook C.A."/>
            <person name="Baltz R.H."/>
            <person name="Jaskunas S.R."/>
            <person name="Rosteck P.R. Jr."/>
            <person name="Skatrud P.L."/>
            <person name="Glass J.I."/>
        </authorList>
    </citation>
    <scope>NUCLEOTIDE SEQUENCE [LARGE SCALE GENOMIC DNA]</scope>
    <source>
        <strain>ATCC BAA-255 / R6</strain>
    </source>
</reference>
<protein>
    <recommendedName>
        <fullName>Zinc transport system ATP-binding protein AdcC</fullName>
    </recommendedName>
</protein>
<accession>P0A2U7</accession>
<accession>O87862</accession>
<organism>
    <name type="scientific">Streptococcus pneumoniae (strain ATCC BAA-255 / R6)</name>
    <dbReference type="NCBI Taxonomy" id="171101"/>
    <lineage>
        <taxon>Bacteria</taxon>
        <taxon>Bacillati</taxon>
        <taxon>Bacillota</taxon>
        <taxon>Bacilli</taxon>
        <taxon>Lactobacillales</taxon>
        <taxon>Streptococcaceae</taxon>
        <taxon>Streptococcus</taxon>
    </lineage>
</organism>